<reference key="1">
    <citation type="journal article" date="2011" name="J. Bacteriol.">
        <title>Comparative genomics of 28 Salmonella enterica isolates: evidence for CRISPR-mediated adaptive sublineage evolution.</title>
        <authorList>
            <person name="Fricke W.F."/>
            <person name="Mammel M.K."/>
            <person name="McDermott P.F."/>
            <person name="Tartera C."/>
            <person name="White D.G."/>
            <person name="Leclerc J.E."/>
            <person name="Ravel J."/>
            <person name="Cebula T.A."/>
        </authorList>
    </citation>
    <scope>NUCLEOTIDE SEQUENCE [LARGE SCALE GENOMIC DNA]</scope>
    <source>
        <strain>SL254</strain>
    </source>
</reference>
<accession>B4T128</accession>
<proteinExistence type="inferred from homology"/>
<keyword id="KW-0030">Aminoacyl-tRNA synthetase</keyword>
<keyword id="KW-0067">ATP-binding</keyword>
<keyword id="KW-0963">Cytoplasm</keyword>
<keyword id="KW-0436">Ligase</keyword>
<keyword id="KW-0547">Nucleotide-binding</keyword>
<keyword id="KW-0648">Protein biosynthesis</keyword>
<organism>
    <name type="scientific">Salmonella newport (strain SL254)</name>
    <dbReference type="NCBI Taxonomy" id="423368"/>
    <lineage>
        <taxon>Bacteria</taxon>
        <taxon>Pseudomonadati</taxon>
        <taxon>Pseudomonadota</taxon>
        <taxon>Gammaproteobacteria</taxon>
        <taxon>Enterobacterales</taxon>
        <taxon>Enterobacteriaceae</taxon>
        <taxon>Salmonella</taxon>
    </lineage>
</organism>
<comment type="function">
    <text evidence="1">Catalyzes the attachment of serine to tRNA(Ser). Is also able to aminoacylate tRNA(Sec) with serine, to form the misacylated tRNA L-seryl-tRNA(Sec), which will be further converted into selenocysteinyl-tRNA(Sec).</text>
</comment>
<comment type="catalytic activity">
    <reaction evidence="1">
        <text>tRNA(Ser) + L-serine + ATP = L-seryl-tRNA(Ser) + AMP + diphosphate + H(+)</text>
        <dbReference type="Rhea" id="RHEA:12292"/>
        <dbReference type="Rhea" id="RHEA-COMP:9669"/>
        <dbReference type="Rhea" id="RHEA-COMP:9703"/>
        <dbReference type="ChEBI" id="CHEBI:15378"/>
        <dbReference type="ChEBI" id="CHEBI:30616"/>
        <dbReference type="ChEBI" id="CHEBI:33019"/>
        <dbReference type="ChEBI" id="CHEBI:33384"/>
        <dbReference type="ChEBI" id="CHEBI:78442"/>
        <dbReference type="ChEBI" id="CHEBI:78533"/>
        <dbReference type="ChEBI" id="CHEBI:456215"/>
        <dbReference type="EC" id="6.1.1.11"/>
    </reaction>
</comment>
<comment type="catalytic activity">
    <reaction evidence="1">
        <text>tRNA(Sec) + L-serine + ATP = L-seryl-tRNA(Sec) + AMP + diphosphate + H(+)</text>
        <dbReference type="Rhea" id="RHEA:42580"/>
        <dbReference type="Rhea" id="RHEA-COMP:9742"/>
        <dbReference type="Rhea" id="RHEA-COMP:10128"/>
        <dbReference type="ChEBI" id="CHEBI:15378"/>
        <dbReference type="ChEBI" id="CHEBI:30616"/>
        <dbReference type="ChEBI" id="CHEBI:33019"/>
        <dbReference type="ChEBI" id="CHEBI:33384"/>
        <dbReference type="ChEBI" id="CHEBI:78442"/>
        <dbReference type="ChEBI" id="CHEBI:78533"/>
        <dbReference type="ChEBI" id="CHEBI:456215"/>
        <dbReference type="EC" id="6.1.1.11"/>
    </reaction>
</comment>
<comment type="pathway">
    <text evidence="1">Aminoacyl-tRNA biosynthesis; selenocysteinyl-tRNA(Sec) biosynthesis; L-seryl-tRNA(Sec) from L-serine and tRNA(Sec): step 1/1.</text>
</comment>
<comment type="subunit">
    <text evidence="1">Homodimer. The tRNA molecule binds across the dimer.</text>
</comment>
<comment type="subcellular location">
    <subcellularLocation>
        <location evidence="1">Cytoplasm</location>
    </subcellularLocation>
</comment>
<comment type="domain">
    <text evidence="1">Consists of two distinct domains, a catalytic core and a N-terminal extension that is involved in tRNA binding.</text>
</comment>
<comment type="similarity">
    <text evidence="1">Belongs to the class-II aminoacyl-tRNA synthetase family. Type-1 seryl-tRNA synthetase subfamily.</text>
</comment>
<sequence length="430" mass="48580">MLDPNLLRNEPDAVAEKLARRGFKLDVDKLRALEERRKVLQVNTENLQAERNSRSKSIGQAKARGEDIEPLRLEVNKLGEELDAAKAELDTLLAEIRDIALTIPNLPADEVPVGKDENDNVEVSRWGTPREFDFEIRDHVTLGEMHSGLDFAAAVKLTGSRFVVMKGQIARMHRALSQFMLDLHTEQHGYSENYVPYLVNHDTLYGTGQLPKFAGDLFHTRPLEEEADSSNYALIPTAEVPLTNLVRDEIIDEDQLPIKMTAHTPCFRSEAGSYGRDTRGLIRMHQFDKVEMVQIVRPEDSMAALEEMTGHAEKVLQLLGLPYRKIILCTGDMGFGACKTYDLEVWVPAQNTYREISSCSNVWDFQARRMQARCRSKSDKKTRLVHTLNGSGLAVGRTLVAVMENYQQADGRIEVPEVLRPYMNGLEYIG</sequence>
<name>SYS_SALNS</name>
<feature type="chain" id="PRO_1000098121" description="Serine--tRNA ligase">
    <location>
        <begin position="1"/>
        <end position="430"/>
    </location>
</feature>
<feature type="binding site" evidence="1">
    <location>
        <begin position="237"/>
        <end position="239"/>
    </location>
    <ligand>
        <name>L-serine</name>
        <dbReference type="ChEBI" id="CHEBI:33384"/>
    </ligand>
</feature>
<feature type="binding site" evidence="1">
    <location>
        <begin position="268"/>
        <end position="270"/>
    </location>
    <ligand>
        <name>ATP</name>
        <dbReference type="ChEBI" id="CHEBI:30616"/>
    </ligand>
</feature>
<feature type="binding site" evidence="1">
    <location>
        <position position="291"/>
    </location>
    <ligand>
        <name>L-serine</name>
        <dbReference type="ChEBI" id="CHEBI:33384"/>
    </ligand>
</feature>
<feature type="binding site" evidence="1">
    <location>
        <begin position="355"/>
        <end position="358"/>
    </location>
    <ligand>
        <name>ATP</name>
        <dbReference type="ChEBI" id="CHEBI:30616"/>
    </ligand>
</feature>
<feature type="binding site" evidence="1">
    <location>
        <position position="391"/>
    </location>
    <ligand>
        <name>L-serine</name>
        <dbReference type="ChEBI" id="CHEBI:33384"/>
    </ligand>
</feature>
<protein>
    <recommendedName>
        <fullName evidence="1">Serine--tRNA ligase</fullName>
        <ecNumber evidence="1">6.1.1.11</ecNumber>
    </recommendedName>
    <alternativeName>
        <fullName evidence="1">Seryl-tRNA synthetase</fullName>
        <shortName evidence="1">SerRS</shortName>
    </alternativeName>
    <alternativeName>
        <fullName evidence="1">Seryl-tRNA(Ser/Sec) synthetase</fullName>
    </alternativeName>
</protein>
<evidence type="ECO:0000255" key="1">
    <source>
        <dbReference type="HAMAP-Rule" id="MF_00176"/>
    </source>
</evidence>
<gene>
    <name evidence="1" type="primary">serS</name>
    <name type="ordered locus">SNSL254_A0997</name>
</gene>
<dbReference type="EC" id="6.1.1.11" evidence="1"/>
<dbReference type="EMBL" id="CP001113">
    <property type="protein sequence ID" value="ACF64626.1"/>
    <property type="molecule type" value="Genomic_DNA"/>
</dbReference>
<dbReference type="RefSeq" id="WP_000886697.1">
    <property type="nucleotide sequence ID" value="NZ_CCMR01000003.1"/>
</dbReference>
<dbReference type="SMR" id="B4T128"/>
<dbReference type="KEGG" id="see:SNSL254_A0997"/>
<dbReference type="HOGENOM" id="CLU_023797_1_1_6"/>
<dbReference type="UniPathway" id="UPA00906">
    <property type="reaction ID" value="UER00895"/>
</dbReference>
<dbReference type="Proteomes" id="UP000008824">
    <property type="component" value="Chromosome"/>
</dbReference>
<dbReference type="GO" id="GO:0005737">
    <property type="term" value="C:cytoplasm"/>
    <property type="evidence" value="ECO:0007669"/>
    <property type="project" value="UniProtKB-SubCell"/>
</dbReference>
<dbReference type="GO" id="GO:0005524">
    <property type="term" value="F:ATP binding"/>
    <property type="evidence" value="ECO:0007669"/>
    <property type="project" value="UniProtKB-UniRule"/>
</dbReference>
<dbReference type="GO" id="GO:0004828">
    <property type="term" value="F:serine-tRNA ligase activity"/>
    <property type="evidence" value="ECO:0007669"/>
    <property type="project" value="UniProtKB-UniRule"/>
</dbReference>
<dbReference type="GO" id="GO:0016260">
    <property type="term" value="P:selenocysteine biosynthetic process"/>
    <property type="evidence" value="ECO:0007669"/>
    <property type="project" value="UniProtKB-UniRule"/>
</dbReference>
<dbReference type="GO" id="GO:0006434">
    <property type="term" value="P:seryl-tRNA aminoacylation"/>
    <property type="evidence" value="ECO:0007669"/>
    <property type="project" value="UniProtKB-UniRule"/>
</dbReference>
<dbReference type="CDD" id="cd00770">
    <property type="entry name" value="SerRS_core"/>
    <property type="match status" value="1"/>
</dbReference>
<dbReference type="FunFam" id="1.10.287.40:FF:000001">
    <property type="entry name" value="Serine--tRNA ligase"/>
    <property type="match status" value="1"/>
</dbReference>
<dbReference type="FunFam" id="3.30.930.10:FF:000018">
    <property type="entry name" value="Serine--tRNA ligase"/>
    <property type="match status" value="1"/>
</dbReference>
<dbReference type="Gene3D" id="3.30.930.10">
    <property type="entry name" value="Bira Bifunctional Protein, Domain 2"/>
    <property type="match status" value="1"/>
</dbReference>
<dbReference type="Gene3D" id="1.10.287.40">
    <property type="entry name" value="Serine-tRNA synthetase, tRNA binding domain"/>
    <property type="match status" value="1"/>
</dbReference>
<dbReference type="HAMAP" id="MF_00176">
    <property type="entry name" value="Ser_tRNA_synth_type1"/>
    <property type="match status" value="1"/>
</dbReference>
<dbReference type="InterPro" id="IPR002314">
    <property type="entry name" value="aa-tRNA-synt_IIb"/>
</dbReference>
<dbReference type="InterPro" id="IPR006195">
    <property type="entry name" value="aa-tRNA-synth_II"/>
</dbReference>
<dbReference type="InterPro" id="IPR045864">
    <property type="entry name" value="aa-tRNA-synth_II/BPL/LPL"/>
</dbReference>
<dbReference type="InterPro" id="IPR002317">
    <property type="entry name" value="Ser-tRNA-ligase_type_1"/>
</dbReference>
<dbReference type="InterPro" id="IPR015866">
    <property type="entry name" value="Ser-tRNA-synth_1_N"/>
</dbReference>
<dbReference type="InterPro" id="IPR042103">
    <property type="entry name" value="SerRS_1_N_sf"/>
</dbReference>
<dbReference type="InterPro" id="IPR033729">
    <property type="entry name" value="SerRS_core"/>
</dbReference>
<dbReference type="InterPro" id="IPR010978">
    <property type="entry name" value="tRNA-bd_arm"/>
</dbReference>
<dbReference type="NCBIfam" id="TIGR00414">
    <property type="entry name" value="serS"/>
    <property type="match status" value="1"/>
</dbReference>
<dbReference type="PANTHER" id="PTHR43697:SF1">
    <property type="entry name" value="SERINE--TRNA LIGASE"/>
    <property type="match status" value="1"/>
</dbReference>
<dbReference type="PANTHER" id="PTHR43697">
    <property type="entry name" value="SERYL-TRNA SYNTHETASE"/>
    <property type="match status" value="1"/>
</dbReference>
<dbReference type="Pfam" id="PF02403">
    <property type="entry name" value="Seryl_tRNA_N"/>
    <property type="match status" value="1"/>
</dbReference>
<dbReference type="Pfam" id="PF00587">
    <property type="entry name" value="tRNA-synt_2b"/>
    <property type="match status" value="1"/>
</dbReference>
<dbReference type="PIRSF" id="PIRSF001529">
    <property type="entry name" value="Ser-tRNA-synth_IIa"/>
    <property type="match status" value="1"/>
</dbReference>
<dbReference type="PRINTS" id="PR00981">
    <property type="entry name" value="TRNASYNTHSER"/>
</dbReference>
<dbReference type="SUPFAM" id="SSF55681">
    <property type="entry name" value="Class II aaRS and biotin synthetases"/>
    <property type="match status" value="1"/>
</dbReference>
<dbReference type="SUPFAM" id="SSF46589">
    <property type="entry name" value="tRNA-binding arm"/>
    <property type="match status" value="1"/>
</dbReference>
<dbReference type="PROSITE" id="PS50862">
    <property type="entry name" value="AA_TRNA_LIGASE_II"/>
    <property type="match status" value="1"/>
</dbReference>